<dbReference type="EC" id="3.2.1.18" evidence="4"/>
<dbReference type="EMBL" id="M18759">
    <property type="protein sequence ID" value="AAA46844.1"/>
    <property type="molecule type" value="Genomic_RNA"/>
</dbReference>
<dbReference type="PIR" id="A29970">
    <property type="entry name" value="HNNZ73"/>
</dbReference>
<dbReference type="SMR" id="P12566"/>
<dbReference type="CAZy" id="GH83">
    <property type="family name" value="Glycoside Hydrolase Family 83"/>
</dbReference>
<dbReference type="GlyCosmos" id="P12566">
    <property type="glycosylation" value="3 sites, No reported glycans"/>
</dbReference>
<dbReference type="GO" id="GO:0020002">
    <property type="term" value="C:host cell plasma membrane"/>
    <property type="evidence" value="ECO:0007669"/>
    <property type="project" value="UniProtKB-SubCell"/>
</dbReference>
<dbReference type="GO" id="GO:0016020">
    <property type="term" value="C:membrane"/>
    <property type="evidence" value="ECO:0007669"/>
    <property type="project" value="UniProtKB-KW"/>
</dbReference>
<dbReference type="GO" id="GO:0019031">
    <property type="term" value="C:viral envelope"/>
    <property type="evidence" value="ECO:0007669"/>
    <property type="project" value="UniProtKB-KW"/>
</dbReference>
<dbReference type="GO" id="GO:0055036">
    <property type="term" value="C:virion membrane"/>
    <property type="evidence" value="ECO:0007669"/>
    <property type="project" value="UniProtKB-SubCell"/>
</dbReference>
<dbReference type="GO" id="GO:0004308">
    <property type="term" value="F:exo-alpha-sialidase activity"/>
    <property type="evidence" value="ECO:0007669"/>
    <property type="project" value="UniProtKB-EC"/>
</dbReference>
<dbReference type="GO" id="GO:0046789">
    <property type="term" value="F:host cell surface receptor binding"/>
    <property type="evidence" value="ECO:0007669"/>
    <property type="project" value="InterPro"/>
</dbReference>
<dbReference type="GO" id="GO:0046718">
    <property type="term" value="P:symbiont entry into host cell"/>
    <property type="evidence" value="ECO:0007669"/>
    <property type="project" value="UniProtKB-KW"/>
</dbReference>
<dbReference type="GO" id="GO:0019062">
    <property type="term" value="P:virion attachment to host cell"/>
    <property type="evidence" value="ECO:0007669"/>
    <property type="project" value="UniProtKB-KW"/>
</dbReference>
<dbReference type="CDD" id="cd15469">
    <property type="entry name" value="HN"/>
    <property type="match status" value="1"/>
</dbReference>
<dbReference type="Gene3D" id="2.120.10.10">
    <property type="match status" value="1"/>
</dbReference>
<dbReference type="InterPro" id="IPR016285">
    <property type="entry name" value="Hemagglutn-neuramid"/>
</dbReference>
<dbReference type="InterPro" id="IPR000665">
    <property type="entry name" value="Hemagglutn/HN"/>
</dbReference>
<dbReference type="InterPro" id="IPR036278">
    <property type="entry name" value="Sialidase_sf"/>
</dbReference>
<dbReference type="Pfam" id="PF00423">
    <property type="entry name" value="HN"/>
    <property type="match status" value="1"/>
</dbReference>
<dbReference type="PIRSF" id="PIRSF001072">
    <property type="entry name" value="Hemagglut-neuramid_paramyxoV"/>
    <property type="match status" value="1"/>
</dbReference>
<dbReference type="SUPFAM" id="SSF50939">
    <property type="entry name" value="Sialidases"/>
    <property type="match status" value="1"/>
</dbReference>
<organismHost>
    <name type="scientific">Homo sapiens</name>
    <name type="common">Human</name>
    <dbReference type="NCBI Taxonomy" id="9606"/>
</organismHost>
<name>HN_PI3HX</name>
<gene>
    <name type="primary">HN</name>
</gene>
<keyword id="KW-1015">Disulfide bond</keyword>
<keyword id="KW-0325">Glycoprotein</keyword>
<keyword id="KW-0348">Hemagglutinin</keyword>
<keyword id="KW-1032">Host cell membrane</keyword>
<keyword id="KW-1043">Host membrane</keyword>
<keyword id="KW-0945">Host-virus interaction</keyword>
<keyword id="KW-0378">Hydrolase</keyword>
<keyword id="KW-0472">Membrane</keyword>
<keyword id="KW-0735">Signal-anchor</keyword>
<keyword id="KW-0812">Transmembrane</keyword>
<keyword id="KW-1133">Transmembrane helix</keyword>
<keyword id="KW-1161">Viral attachment to host cell</keyword>
<keyword id="KW-0261">Viral envelope protein</keyword>
<keyword id="KW-0946">Virion</keyword>
<keyword id="KW-1160">Virus entry into host cell</keyword>
<evidence type="ECO:0000250" key="1"/>
<evidence type="ECO:0000250" key="2">
    <source>
        <dbReference type="UniProtKB" id="P04853"/>
    </source>
</evidence>
<evidence type="ECO:0000250" key="3">
    <source>
        <dbReference type="UniProtKB" id="Q91UL0"/>
    </source>
</evidence>
<evidence type="ECO:0000250" key="4">
    <source>
        <dbReference type="UniProtKB" id="Q9WAF5"/>
    </source>
</evidence>
<evidence type="ECO:0000255" key="5"/>
<evidence type="ECO:0000305" key="6"/>
<sequence length="572" mass="64315">MEYWKHTNHGKDAGNELETSMATHGNKLTNKITYILWTIILVLLSIVFIIVLINSIKSEKAHKSLLQDINNEFMEITEKIQMASDNTNDLIQSGVNTRLLTIQSHVQNYIPISLTQQMSDLRKFISEITIRNDNQEVPPQRIIHDVGIKPLNPDDFWRCTSGLPSLMRTPKIRLMPGPGLLAMPTTVDGCVRTPSLVINDLIYAYTSNLITRGCQDIGKSYQVLQIGIITVNSDLVPDLNPRISHTFNINDNRKSCSLALLNTDVYQLCSTPKVDERSDYASSGIEDIVLDIVNYDGSISTTRFKNNNISFDQPYAASYPSVGPGIYYKGKIIFLGYGGLEHPINENVICNTTGCPGKTQRDCNQASHSPWFSDRRMVNSIIVVDKGLNSIPKLKVWTISMRQNYWGSEGRLLLLGNKIYIYTRSTSWHSKLQLGIIDITDYSDIRIKWTWHNVLSRPGNNECPWGHSCPDGCITGVYTDAYPLNPTGSIVSSVILDSQKSRVNPVITYSTATERVNELAIRNRTLSAGYTTTSCITHYNKGYCFHIVEINHKSSNTFQPMLFKTEIPKSCS</sequence>
<comment type="function">
    <text evidence="1">Attaches the virus to sialic acid-containing cell receptors and thereby initiating infection. Binding of HN protein to the receptor induces a conformational change that allows the F protein to trigger virion/cell membranes fusion (By similarity).</text>
</comment>
<comment type="function">
    <text evidence="1">Neuraminidase activity ensures the efficient spread of the virus by dissociating the mature virions from the neuraminic acid containing glycoproteins.</text>
</comment>
<comment type="catalytic activity">
    <reaction evidence="4">
        <text>Hydrolysis of alpha-(2-&gt;3)-, alpha-(2-&gt;6)-, alpha-(2-&gt;8)- glycosidic linkages of terminal sialic acid residues in oligosaccharides, glycoproteins, glycolipids, colominic acid and synthetic substrates.</text>
        <dbReference type="EC" id="3.2.1.18"/>
    </reaction>
</comment>
<comment type="subunit">
    <text evidence="2 4">Homotetramer; composed of disulfide-linked homodimers (By similarity). Interacts with F protein trimer (By similarity).</text>
</comment>
<comment type="subcellular location">
    <subcellularLocation>
        <location evidence="6">Virion membrane</location>
        <topology evidence="6">Single-pass type II membrane protein</topology>
    </subcellularLocation>
    <subcellularLocation>
        <location evidence="6">Host cell membrane</location>
        <topology evidence="6">Single-pass type II membrane protein</topology>
    </subcellularLocation>
</comment>
<comment type="domain">
    <text evidence="4">The C-terminus (head domain) is involved in binding the cellular receptor.</text>
</comment>
<comment type="similarity">
    <text evidence="6">Belongs to the paramyxoviruses hemagglutinin-neuraminidase family.</text>
</comment>
<feature type="chain" id="PRO_0000142631" description="Hemagglutinin-neuraminidase">
    <location>
        <begin position="1"/>
        <end position="572"/>
    </location>
</feature>
<feature type="topological domain" description="Intravirion" evidence="5">
    <location>
        <begin position="1"/>
        <end position="31"/>
    </location>
</feature>
<feature type="transmembrane region" description="Helical" evidence="5">
    <location>
        <begin position="32"/>
        <end position="52"/>
    </location>
</feature>
<feature type="topological domain" description="Virion surface" evidence="5">
    <location>
        <begin position="53"/>
        <end position="572"/>
    </location>
</feature>
<feature type="region of interest" description="Involved in neuraminidase activity" evidence="3">
    <location>
        <begin position="252"/>
        <end position="257"/>
    </location>
</feature>
<feature type="glycosylation site" description="N-linked (GlcNAc...) asparagine; by host" evidence="5">
    <location>
        <position position="308"/>
    </location>
</feature>
<feature type="glycosylation site" description="N-linked (GlcNAc...) asparagine; by host" evidence="5">
    <location>
        <position position="351"/>
    </location>
</feature>
<feature type="glycosylation site" description="N-linked (GlcNAc...) asparagine; by host" evidence="5">
    <location>
        <position position="523"/>
    </location>
</feature>
<feature type="disulfide bond" evidence="4">
    <location>
        <begin position="190"/>
        <end position="214"/>
    </location>
</feature>
<feature type="disulfide bond" evidence="4">
    <location>
        <begin position="256"/>
        <end position="269"/>
    </location>
</feature>
<feature type="disulfide bond" evidence="4">
    <location>
        <begin position="355"/>
        <end position="469"/>
    </location>
</feature>
<feature type="disulfide bond" evidence="4">
    <location>
        <begin position="463"/>
        <end position="473"/>
    </location>
</feature>
<feature type="disulfide bond" evidence="4">
    <location>
        <begin position="535"/>
        <end position="544"/>
    </location>
</feature>
<proteinExistence type="inferred from homology"/>
<protein>
    <recommendedName>
        <fullName>Hemagglutinin-neuraminidase</fullName>
        <ecNumber evidence="4">3.2.1.18</ecNumber>
    </recommendedName>
</protein>
<accession>P12566</accession>
<reference key="1">
    <citation type="journal article" date="1988" name="Virology">
        <title>Nucleotide and deduced amino acid sequence of hemagglutinin-neuraminidase genes of human type 3 parainfluenza viruses isolated from 1957 to 1983.</title>
        <authorList>
            <person name="van Wyke Coelingh K.L."/>
            <person name="Winter C.C."/>
            <person name="Murphy B.R."/>
        </authorList>
    </citation>
    <scope>NUCLEOTIDE SEQUENCE [GENOMIC RNA]</scope>
</reference>
<organism>
    <name type="scientific">Human parainfluenza 3 virus (strain Wash/1511/73)</name>
    <name type="common">HPIV-3</name>
    <dbReference type="NCBI Taxonomy" id="11223"/>
    <lineage>
        <taxon>Viruses</taxon>
        <taxon>Riboviria</taxon>
        <taxon>Orthornavirae</taxon>
        <taxon>Negarnaviricota</taxon>
        <taxon>Haploviricotina</taxon>
        <taxon>Monjiviricetes</taxon>
        <taxon>Mononegavirales</taxon>
        <taxon>Paramyxoviridae</taxon>
        <taxon>Feraresvirinae</taxon>
        <taxon>Respirovirus</taxon>
        <taxon>Respirovirus pneumoniae</taxon>
    </lineage>
</organism>